<proteinExistence type="inferred from homology"/>
<protein>
    <recommendedName>
        <fullName evidence="1">Hydroxyethylthiazole kinase</fullName>
        <ecNumber evidence="1">2.7.1.50</ecNumber>
    </recommendedName>
    <alternativeName>
        <fullName evidence="1">4-methyl-5-beta-hydroxyethylthiazole kinase</fullName>
        <shortName evidence="1">TH kinase</shortName>
        <shortName evidence="1">Thz kinase</shortName>
    </alternativeName>
</protein>
<feature type="chain" id="PRO_0000156929" description="Hydroxyethylthiazole kinase">
    <location>
        <begin position="1"/>
        <end position="265"/>
    </location>
</feature>
<feature type="binding site" evidence="1">
    <location>
        <position position="36"/>
    </location>
    <ligand>
        <name>substrate</name>
    </ligand>
</feature>
<feature type="binding site" evidence="1">
    <location>
        <position position="112"/>
    </location>
    <ligand>
        <name>ATP</name>
        <dbReference type="ChEBI" id="CHEBI:30616"/>
    </ligand>
</feature>
<feature type="binding site" evidence="1">
    <location>
        <position position="160"/>
    </location>
    <ligand>
        <name>ATP</name>
        <dbReference type="ChEBI" id="CHEBI:30616"/>
    </ligand>
</feature>
<feature type="binding site" evidence="1">
    <location>
        <position position="187"/>
    </location>
    <ligand>
        <name>substrate</name>
    </ligand>
</feature>
<organism>
    <name type="scientific">Clostridium perfringens (strain 13 / Type A)</name>
    <dbReference type="NCBI Taxonomy" id="195102"/>
    <lineage>
        <taxon>Bacteria</taxon>
        <taxon>Bacillati</taxon>
        <taxon>Bacillota</taxon>
        <taxon>Clostridia</taxon>
        <taxon>Eubacteriales</taxon>
        <taxon>Clostridiaceae</taxon>
        <taxon>Clostridium</taxon>
    </lineage>
</organism>
<accession>Q8XKQ7</accession>
<dbReference type="EC" id="2.7.1.50" evidence="1"/>
<dbReference type="EMBL" id="BA000016">
    <property type="protein sequence ID" value="BAB81043.1"/>
    <property type="molecule type" value="Genomic_DNA"/>
</dbReference>
<dbReference type="RefSeq" id="WP_011010395.1">
    <property type="nucleotide sequence ID" value="NC_003366.1"/>
</dbReference>
<dbReference type="SMR" id="Q8XKQ7"/>
<dbReference type="STRING" id="195102.gene:10490600"/>
<dbReference type="KEGG" id="cpe:CPE1337"/>
<dbReference type="HOGENOM" id="CLU_019943_0_1_9"/>
<dbReference type="UniPathway" id="UPA00060">
    <property type="reaction ID" value="UER00139"/>
</dbReference>
<dbReference type="Proteomes" id="UP000000818">
    <property type="component" value="Chromosome"/>
</dbReference>
<dbReference type="GO" id="GO:0005524">
    <property type="term" value="F:ATP binding"/>
    <property type="evidence" value="ECO:0007669"/>
    <property type="project" value="UniProtKB-UniRule"/>
</dbReference>
<dbReference type="GO" id="GO:0004417">
    <property type="term" value="F:hydroxyethylthiazole kinase activity"/>
    <property type="evidence" value="ECO:0007669"/>
    <property type="project" value="UniProtKB-UniRule"/>
</dbReference>
<dbReference type="GO" id="GO:0000287">
    <property type="term" value="F:magnesium ion binding"/>
    <property type="evidence" value="ECO:0007669"/>
    <property type="project" value="UniProtKB-UniRule"/>
</dbReference>
<dbReference type="GO" id="GO:0009228">
    <property type="term" value="P:thiamine biosynthetic process"/>
    <property type="evidence" value="ECO:0007669"/>
    <property type="project" value="UniProtKB-KW"/>
</dbReference>
<dbReference type="GO" id="GO:0009229">
    <property type="term" value="P:thiamine diphosphate biosynthetic process"/>
    <property type="evidence" value="ECO:0007669"/>
    <property type="project" value="UniProtKB-UniRule"/>
</dbReference>
<dbReference type="CDD" id="cd01170">
    <property type="entry name" value="THZ_kinase"/>
    <property type="match status" value="1"/>
</dbReference>
<dbReference type="Gene3D" id="3.40.1190.20">
    <property type="match status" value="1"/>
</dbReference>
<dbReference type="HAMAP" id="MF_00228">
    <property type="entry name" value="Thz_kinase"/>
    <property type="match status" value="1"/>
</dbReference>
<dbReference type="InterPro" id="IPR000417">
    <property type="entry name" value="Hyethyz_kinase"/>
</dbReference>
<dbReference type="InterPro" id="IPR029056">
    <property type="entry name" value="Ribokinase-like"/>
</dbReference>
<dbReference type="NCBIfam" id="NF006830">
    <property type="entry name" value="PRK09355.1"/>
    <property type="match status" value="1"/>
</dbReference>
<dbReference type="Pfam" id="PF02110">
    <property type="entry name" value="HK"/>
    <property type="match status" value="1"/>
</dbReference>
<dbReference type="PIRSF" id="PIRSF000513">
    <property type="entry name" value="Thz_kinase"/>
    <property type="match status" value="1"/>
</dbReference>
<dbReference type="PRINTS" id="PR01099">
    <property type="entry name" value="HYETHTZKNASE"/>
</dbReference>
<dbReference type="SUPFAM" id="SSF53613">
    <property type="entry name" value="Ribokinase-like"/>
    <property type="match status" value="1"/>
</dbReference>
<keyword id="KW-0067">ATP-binding</keyword>
<keyword id="KW-0418">Kinase</keyword>
<keyword id="KW-0460">Magnesium</keyword>
<keyword id="KW-0479">Metal-binding</keyword>
<keyword id="KW-0547">Nucleotide-binding</keyword>
<keyword id="KW-1185">Reference proteome</keyword>
<keyword id="KW-0784">Thiamine biosynthesis</keyword>
<keyword id="KW-0808">Transferase</keyword>
<name>THIM_CLOPE</name>
<evidence type="ECO:0000255" key="1">
    <source>
        <dbReference type="HAMAP-Rule" id="MF_00228"/>
    </source>
</evidence>
<reference key="1">
    <citation type="journal article" date="2002" name="Proc. Natl. Acad. Sci. U.S.A.">
        <title>Complete genome sequence of Clostridium perfringens, an anaerobic flesh-eater.</title>
        <authorList>
            <person name="Shimizu T."/>
            <person name="Ohtani K."/>
            <person name="Hirakawa H."/>
            <person name="Ohshima K."/>
            <person name="Yamashita A."/>
            <person name="Shiba T."/>
            <person name="Ogasawara N."/>
            <person name="Hattori M."/>
            <person name="Kuhara S."/>
            <person name="Hayashi H."/>
        </authorList>
    </citation>
    <scope>NUCLEOTIDE SEQUENCE [LARGE SCALE GENOMIC DNA]</scope>
    <source>
        <strain>13 / Type A</strain>
    </source>
</reference>
<comment type="function">
    <text evidence="1">Catalyzes the phosphorylation of the hydroxyl group of 4-methyl-5-beta-hydroxyethylthiazole (THZ).</text>
</comment>
<comment type="catalytic activity">
    <reaction evidence="1">
        <text>5-(2-hydroxyethyl)-4-methylthiazole + ATP = 4-methyl-5-(2-phosphooxyethyl)-thiazole + ADP + H(+)</text>
        <dbReference type="Rhea" id="RHEA:24212"/>
        <dbReference type="ChEBI" id="CHEBI:15378"/>
        <dbReference type="ChEBI" id="CHEBI:17957"/>
        <dbReference type="ChEBI" id="CHEBI:30616"/>
        <dbReference type="ChEBI" id="CHEBI:58296"/>
        <dbReference type="ChEBI" id="CHEBI:456216"/>
        <dbReference type="EC" id="2.7.1.50"/>
    </reaction>
</comment>
<comment type="cofactor">
    <cofactor evidence="1">
        <name>Mg(2+)</name>
        <dbReference type="ChEBI" id="CHEBI:18420"/>
    </cofactor>
</comment>
<comment type="pathway">
    <text evidence="1">Cofactor biosynthesis; thiamine diphosphate biosynthesis; 4-methyl-5-(2-phosphoethyl)-thiazole from 5-(2-hydroxyethyl)-4-methylthiazole: step 1/1.</text>
</comment>
<comment type="similarity">
    <text evidence="1">Belongs to the Thz kinase family.</text>
</comment>
<gene>
    <name evidence="1" type="primary">thiM</name>
    <name type="ordered locus">CPE1337</name>
</gene>
<sequence>MEVLKRENPLIHMITNYVTVNDLAQVTINYGGLPLMATHHDELKEITKMANGLLVNIGTLEPYQMESSMISMKIAKEKGIPSVLDPVGVQASKLRRDFAKKIILEGEPSLIKGNLAEIKTLIGETSNSIGIDSFEDSLSENTKNKIKEYARERNLVVVVSGVVDFITNGEESASVKNGTYKMSKITGTGCMLGALLTLALSFYDHKDLRFKEVVKAVSTWGICGELAEERLREKEGLMTFKHNLLDELSIINDETIKEREKVIYE</sequence>